<feature type="chain" id="PRO_0000269782" description="Histone-lysine N-methyltransferase, H3 lysine-36 specific">
    <location>
        <begin position="1"/>
        <end position="844"/>
    </location>
</feature>
<feature type="domain" description="AWS" evidence="6">
    <location>
        <begin position="84"/>
        <end position="140"/>
    </location>
</feature>
<feature type="domain" description="SET" evidence="4">
    <location>
        <begin position="142"/>
        <end position="259"/>
    </location>
</feature>
<feature type="domain" description="Post-SET" evidence="3">
    <location>
        <begin position="266"/>
        <end position="282"/>
    </location>
</feature>
<feature type="domain" description="WW" evidence="5">
    <location>
        <begin position="558"/>
        <end position="592"/>
    </location>
</feature>
<feature type="region of interest" description="Disordered" evidence="8">
    <location>
        <begin position="1"/>
        <end position="21"/>
    </location>
</feature>
<feature type="region of interest" description="Disordered" evidence="8">
    <location>
        <begin position="501"/>
        <end position="565"/>
    </location>
</feature>
<feature type="region of interest" description="Disordered" evidence="8">
    <location>
        <begin position="689"/>
        <end position="721"/>
    </location>
</feature>
<feature type="region of interest" description="Disordered" evidence="8">
    <location>
        <begin position="812"/>
        <end position="844"/>
    </location>
</feature>
<feature type="compositionally biased region" description="Low complexity" evidence="8">
    <location>
        <begin position="9"/>
        <end position="21"/>
    </location>
</feature>
<feature type="compositionally biased region" description="Low complexity" evidence="8">
    <location>
        <begin position="507"/>
        <end position="525"/>
    </location>
</feature>
<feature type="compositionally biased region" description="Low complexity" evidence="8">
    <location>
        <begin position="540"/>
        <end position="555"/>
    </location>
</feature>
<feature type="compositionally biased region" description="Basic residues" evidence="8">
    <location>
        <begin position="695"/>
        <end position="708"/>
    </location>
</feature>
<feature type="compositionally biased region" description="Basic and acidic residues" evidence="8">
    <location>
        <begin position="832"/>
        <end position="844"/>
    </location>
</feature>
<sequence length="844" mass="95327">MSNNNFQESSNNTSSPSKRSTPMLFLDAENKTQEALTTFELLNACTYQNKYVGSANVTTTATTSTKTSNSTSTKSHQQQHRRKLEYMTCDCEEEWDSELQMNLACGPDSNCINRITCVECVNRNCLCGDDCQNQRFQNRQYSKVKVIQTELKGYGLIAEQDIEENQFIYEYIGEVIDEISFRQRMIEYDLRHLKHFYFMMLSNDSFIDATEKGSLGRFINHSCNPNAFVDKWHVGDRLRMGIFAKRKISRGEEITFDYNVDRYGAQSQPCYCGEPNCIKFMGGKTQTDAALLLPQMIAEALGVTPRQEKAWLKENKSIRNQQQNDESNINEEFVNSIEIEPIENQDGVTKVMSALMKTQHPLIIKKLIERIFLSNDQDDINVMFVRFHGYKTISTILQDLLVAKNSGKESETTDNNDIDNSTGDDDQDKDELIIKILKILVSWPAVTKNKIASANLEEVVKDIQTNNENSNNNDEINQLCTSLLDRWSKLEMAYRIPKQESVPTNNAAAAATTTATATGTTTSASPFERISSHTPEVGGTNTPSSTSQQQQQQNSRDAGLPENWRSAFDKNTGGYYYYNLVTKETTWERPLGSLPLGPKPPSGPGLKGRINKYNEIDLAKREELRIQKEKEMKFIEMQNRDRKLKELIEMSKKSMNNIGGSSGTTITAATINGLSDNGGNNNGNITGIYGDDKHSKHHHHHHDKHLKNGPRNTSTSSSSGNNVEKIWKRIFAKYIPNIIKKYESEIGRDNVKGCAKELVNILTQSEIKHGNSLPSSSSSNGYSMELSDKKLKKIKEYSHGYMDKFLIKFNNSKKHKSTMGSKGSDNHKRKHNGDGDNGVKRSKV</sequence>
<name>SET2_CANAL</name>
<reference key="1">
    <citation type="journal article" date="2004" name="Proc. Natl. Acad. Sci. U.S.A.">
        <title>The diploid genome sequence of Candida albicans.</title>
        <authorList>
            <person name="Jones T."/>
            <person name="Federspiel N.A."/>
            <person name="Chibana H."/>
            <person name="Dungan J."/>
            <person name="Kalman S."/>
            <person name="Magee B.B."/>
            <person name="Newport G."/>
            <person name="Thorstenson Y.R."/>
            <person name="Agabian N."/>
            <person name="Magee P.T."/>
            <person name="Davis R.W."/>
            <person name="Scherer S."/>
        </authorList>
    </citation>
    <scope>NUCLEOTIDE SEQUENCE [LARGE SCALE GENOMIC DNA]</scope>
    <source>
        <strain>SC5314 / ATCC MYA-2876</strain>
    </source>
</reference>
<reference key="2">
    <citation type="journal article" date="2007" name="Genome Biol.">
        <title>Assembly of the Candida albicans genome into sixteen supercontigs aligned on the eight chromosomes.</title>
        <authorList>
            <person name="van het Hoog M."/>
            <person name="Rast T.J."/>
            <person name="Martchenko M."/>
            <person name="Grindle S."/>
            <person name="Dignard D."/>
            <person name="Hogues H."/>
            <person name="Cuomo C."/>
            <person name="Berriman M."/>
            <person name="Scherer S."/>
            <person name="Magee B.B."/>
            <person name="Whiteway M."/>
            <person name="Chibana H."/>
            <person name="Nantel A."/>
            <person name="Magee P.T."/>
        </authorList>
    </citation>
    <scope>GENOME REANNOTATION</scope>
    <source>
        <strain>SC5314 / ATCC MYA-2876</strain>
    </source>
</reference>
<reference key="3">
    <citation type="journal article" date="2013" name="Genome Biol.">
        <title>Assembly of a phased diploid Candida albicans genome facilitates allele-specific measurements and provides a simple model for repeat and indel structure.</title>
        <authorList>
            <person name="Muzzey D."/>
            <person name="Schwartz K."/>
            <person name="Weissman J.S."/>
            <person name="Sherlock G."/>
        </authorList>
    </citation>
    <scope>NUCLEOTIDE SEQUENCE [LARGE SCALE GENOMIC DNA]</scope>
    <scope>GENOME REANNOTATION</scope>
    <source>
        <strain>SC5314 / ATCC MYA-2876</strain>
    </source>
</reference>
<dbReference type="EC" id="2.1.1.359" evidence="2"/>
<dbReference type="EMBL" id="CP017624">
    <property type="protein sequence ID" value="AOW28002.1"/>
    <property type="molecule type" value="Genomic_DNA"/>
</dbReference>
<dbReference type="RefSeq" id="XP_714401.1">
    <property type="nucleotide sequence ID" value="XM_709308.1"/>
</dbReference>
<dbReference type="SMR" id="Q59XV0"/>
<dbReference type="FunCoup" id="Q59XV0">
    <property type="interactions" value="137"/>
</dbReference>
<dbReference type="STRING" id="237561.Q59XV0"/>
<dbReference type="EnsemblFungi" id="C2_10250C_A-T">
    <property type="protein sequence ID" value="C2_10250C_A-T-p1"/>
    <property type="gene ID" value="C2_10250C_A"/>
</dbReference>
<dbReference type="GeneID" id="3643923"/>
<dbReference type="KEGG" id="cal:CAALFM_C210250CA"/>
<dbReference type="CGD" id="CAL0000174178">
    <property type="gene designation" value="SET2"/>
</dbReference>
<dbReference type="VEuPathDB" id="FungiDB:C2_10250C_A"/>
<dbReference type="eggNOG" id="KOG4442">
    <property type="taxonomic scope" value="Eukaryota"/>
</dbReference>
<dbReference type="HOGENOM" id="CLU_008492_1_1_1"/>
<dbReference type="InParanoid" id="Q59XV0"/>
<dbReference type="OMA" id="AQSQPCY"/>
<dbReference type="OrthoDB" id="422362at2759"/>
<dbReference type="PRO" id="PR:Q59XV0"/>
<dbReference type="Proteomes" id="UP000000559">
    <property type="component" value="Chromosome 2"/>
</dbReference>
<dbReference type="GO" id="GO:0000785">
    <property type="term" value="C:chromatin"/>
    <property type="evidence" value="ECO:0000318"/>
    <property type="project" value="GO_Central"/>
</dbReference>
<dbReference type="GO" id="GO:0005829">
    <property type="term" value="C:cytosol"/>
    <property type="evidence" value="ECO:0007669"/>
    <property type="project" value="EnsemblFungi"/>
</dbReference>
<dbReference type="GO" id="GO:0005634">
    <property type="term" value="C:nucleus"/>
    <property type="evidence" value="ECO:0000318"/>
    <property type="project" value="GO_Central"/>
</dbReference>
<dbReference type="GO" id="GO:0046975">
    <property type="term" value="F:histone H3K36 methyltransferase activity"/>
    <property type="evidence" value="ECO:0000318"/>
    <property type="project" value="GO_Central"/>
</dbReference>
<dbReference type="GO" id="GO:0140955">
    <property type="term" value="F:histone H3K36 trimethyltransferase activity"/>
    <property type="evidence" value="ECO:0007669"/>
    <property type="project" value="UniProtKB-EC"/>
</dbReference>
<dbReference type="GO" id="GO:0003723">
    <property type="term" value="F:RNA binding"/>
    <property type="evidence" value="ECO:0007669"/>
    <property type="project" value="EnsemblFungi"/>
</dbReference>
<dbReference type="GO" id="GO:0030437">
    <property type="term" value="P:ascospore formation"/>
    <property type="evidence" value="ECO:0007669"/>
    <property type="project" value="EnsemblFungi"/>
</dbReference>
<dbReference type="GO" id="GO:0006354">
    <property type="term" value="P:DNA-templated transcription elongation"/>
    <property type="evidence" value="ECO:0007669"/>
    <property type="project" value="EnsemblFungi"/>
</dbReference>
<dbReference type="GO" id="GO:0006353">
    <property type="term" value="P:DNA-templated transcription termination"/>
    <property type="evidence" value="ECO:0007669"/>
    <property type="project" value="EnsemblFungi"/>
</dbReference>
<dbReference type="GO" id="GO:0032259">
    <property type="term" value="P:methylation"/>
    <property type="evidence" value="ECO:0007669"/>
    <property type="project" value="UniProtKB-KW"/>
</dbReference>
<dbReference type="GO" id="GO:0060195">
    <property type="term" value="P:negative regulation of antisense RNA transcription"/>
    <property type="evidence" value="ECO:0007669"/>
    <property type="project" value="EnsemblFungi"/>
</dbReference>
<dbReference type="GO" id="GO:0045128">
    <property type="term" value="P:negative regulation of reciprocal meiotic recombination"/>
    <property type="evidence" value="ECO:0007669"/>
    <property type="project" value="EnsemblFungi"/>
</dbReference>
<dbReference type="GO" id="GO:0030174">
    <property type="term" value="P:regulation of DNA-templated DNA replication initiation"/>
    <property type="evidence" value="ECO:0007669"/>
    <property type="project" value="EnsemblFungi"/>
</dbReference>
<dbReference type="GO" id="GO:0006355">
    <property type="term" value="P:regulation of DNA-templated transcription"/>
    <property type="evidence" value="ECO:0000318"/>
    <property type="project" value="GO_Central"/>
</dbReference>
<dbReference type="GO" id="GO:0009302">
    <property type="term" value="P:sno(s)RNA transcription"/>
    <property type="evidence" value="ECO:0007669"/>
    <property type="project" value="EnsemblFungi"/>
</dbReference>
<dbReference type="GO" id="GO:0006283">
    <property type="term" value="P:transcription-coupled nucleotide-excision repair"/>
    <property type="evidence" value="ECO:0007669"/>
    <property type="project" value="EnsemblFungi"/>
</dbReference>
<dbReference type="CDD" id="cd19172">
    <property type="entry name" value="SET_SETD2"/>
    <property type="match status" value="1"/>
</dbReference>
<dbReference type="CDD" id="cd00201">
    <property type="entry name" value="WW"/>
    <property type="match status" value="1"/>
</dbReference>
<dbReference type="FunFam" id="2.170.270.10:FF:000033">
    <property type="entry name" value="Histone-lysine N-methyltransferase"/>
    <property type="match status" value="1"/>
</dbReference>
<dbReference type="Gene3D" id="2.20.70.10">
    <property type="match status" value="1"/>
</dbReference>
<dbReference type="Gene3D" id="2.170.270.10">
    <property type="entry name" value="SET domain"/>
    <property type="match status" value="1"/>
</dbReference>
<dbReference type="Gene3D" id="1.10.1740.100">
    <property type="entry name" value="Set2, Rpb1 interacting domain"/>
    <property type="match status" value="1"/>
</dbReference>
<dbReference type="InterPro" id="IPR006560">
    <property type="entry name" value="AWS_dom"/>
</dbReference>
<dbReference type="InterPro" id="IPR003616">
    <property type="entry name" value="Post-SET_dom"/>
</dbReference>
<dbReference type="InterPro" id="IPR025788">
    <property type="entry name" value="Set2_fungi"/>
</dbReference>
<dbReference type="InterPro" id="IPR050777">
    <property type="entry name" value="SET2_Histone-Lys_MeTrsfase"/>
</dbReference>
<dbReference type="InterPro" id="IPR001214">
    <property type="entry name" value="SET_dom"/>
</dbReference>
<dbReference type="InterPro" id="IPR046341">
    <property type="entry name" value="SET_dom_sf"/>
</dbReference>
<dbReference type="InterPro" id="IPR044437">
    <property type="entry name" value="SETD2/Set2_SET"/>
</dbReference>
<dbReference type="InterPro" id="IPR013257">
    <property type="entry name" value="SRI"/>
</dbReference>
<dbReference type="InterPro" id="IPR038190">
    <property type="entry name" value="SRI_sf"/>
</dbReference>
<dbReference type="InterPro" id="IPR001202">
    <property type="entry name" value="WW_dom"/>
</dbReference>
<dbReference type="InterPro" id="IPR036020">
    <property type="entry name" value="WW_dom_sf"/>
</dbReference>
<dbReference type="PANTHER" id="PTHR22884">
    <property type="entry name" value="SET DOMAIN PROTEINS"/>
    <property type="match status" value="1"/>
</dbReference>
<dbReference type="Pfam" id="PF17907">
    <property type="entry name" value="AWS"/>
    <property type="match status" value="1"/>
</dbReference>
<dbReference type="Pfam" id="PF00856">
    <property type="entry name" value="SET"/>
    <property type="match status" value="1"/>
</dbReference>
<dbReference type="Pfam" id="PF08236">
    <property type="entry name" value="SRI"/>
    <property type="match status" value="1"/>
</dbReference>
<dbReference type="Pfam" id="PF00397">
    <property type="entry name" value="WW"/>
    <property type="match status" value="1"/>
</dbReference>
<dbReference type="SMART" id="SM00570">
    <property type="entry name" value="AWS"/>
    <property type="match status" value="1"/>
</dbReference>
<dbReference type="SMART" id="SM00508">
    <property type="entry name" value="PostSET"/>
    <property type="match status" value="1"/>
</dbReference>
<dbReference type="SMART" id="SM00317">
    <property type="entry name" value="SET"/>
    <property type="match status" value="1"/>
</dbReference>
<dbReference type="SMART" id="SM00456">
    <property type="entry name" value="WW"/>
    <property type="match status" value="1"/>
</dbReference>
<dbReference type="SUPFAM" id="SSF82199">
    <property type="entry name" value="SET domain"/>
    <property type="match status" value="1"/>
</dbReference>
<dbReference type="SUPFAM" id="SSF51045">
    <property type="entry name" value="WW domain"/>
    <property type="match status" value="1"/>
</dbReference>
<dbReference type="PROSITE" id="PS51215">
    <property type="entry name" value="AWS"/>
    <property type="match status" value="1"/>
</dbReference>
<dbReference type="PROSITE" id="PS50868">
    <property type="entry name" value="POST_SET"/>
    <property type="match status" value="1"/>
</dbReference>
<dbReference type="PROSITE" id="PS51568">
    <property type="entry name" value="SAM_MT43_SET2_1"/>
    <property type="match status" value="1"/>
</dbReference>
<dbReference type="PROSITE" id="PS50280">
    <property type="entry name" value="SET"/>
    <property type="match status" value="1"/>
</dbReference>
<dbReference type="PROSITE" id="PS01159">
    <property type="entry name" value="WW_DOMAIN_1"/>
    <property type="match status" value="1"/>
</dbReference>
<dbReference type="PROSITE" id="PS50020">
    <property type="entry name" value="WW_DOMAIN_2"/>
    <property type="match status" value="1"/>
</dbReference>
<proteinExistence type="inferred from homology"/>
<evidence type="ECO:0000250" key="1"/>
<evidence type="ECO:0000250" key="2">
    <source>
        <dbReference type="UniProtKB" id="P46995"/>
    </source>
</evidence>
<evidence type="ECO:0000255" key="3">
    <source>
        <dbReference type="PROSITE-ProRule" id="PRU00155"/>
    </source>
</evidence>
<evidence type="ECO:0000255" key="4">
    <source>
        <dbReference type="PROSITE-ProRule" id="PRU00190"/>
    </source>
</evidence>
<evidence type="ECO:0000255" key="5">
    <source>
        <dbReference type="PROSITE-ProRule" id="PRU00224"/>
    </source>
</evidence>
<evidence type="ECO:0000255" key="6">
    <source>
        <dbReference type="PROSITE-ProRule" id="PRU00562"/>
    </source>
</evidence>
<evidence type="ECO:0000255" key="7">
    <source>
        <dbReference type="PROSITE-ProRule" id="PRU00901"/>
    </source>
</evidence>
<evidence type="ECO:0000256" key="8">
    <source>
        <dbReference type="SAM" id="MobiDB-lite"/>
    </source>
</evidence>
<organism>
    <name type="scientific">Candida albicans (strain SC5314 / ATCC MYA-2876)</name>
    <name type="common">Yeast</name>
    <dbReference type="NCBI Taxonomy" id="237561"/>
    <lineage>
        <taxon>Eukaryota</taxon>
        <taxon>Fungi</taxon>
        <taxon>Dikarya</taxon>
        <taxon>Ascomycota</taxon>
        <taxon>Saccharomycotina</taxon>
        <taxon>Pichiomycetes</taxon>
        <taxon>Debaryomycetaceae</taxon>
        <taxon>Candida/Lodderomyces clade</taxon>
        <taxon>Candida</taxon>
    </lineage>
</organism>
<comment type="function">
    <text evidence="2">Histone methyltransferase that trimethylates histone H3 'Lys-36' forming H3K36me3. Involved in transcription elongation as well as in transcription repression.</text>
</comment>
<comment type="catalytic activity">
    <reaction evidence="2 7">
        <text>L-lysyl(36)-[histone H3] + 3 S-adenosyl-L-methionine = N(6),N(6),N(6)-trimethyl-L-lysyl(36)-[histone H3] + 3 S-adenosyl-L-homocysteine + 3 H(+)</text>
        <dbReference type="Rhea" id="RHEA:60324"/>
        <dbReference type="Rhea" id="RHEA-COMP:9785"/>
        <dbReference type="Rhea" id="RHEA-COMP:15536"/>
        <dbReference type="ChEBI" id="CHEBI:15378"/>
        <dbReference type="ChEBI" id="CHEBI:29969"/>
        <dbReference type="ChEBI" id="CHEBI:57856"/>
        <dbReference type="ChEBI" id="CHEBI:59789"/>
        <dbReference type="ChEBI" id="CHEBI:61961"/>
        <dbReference type="EC" id="2.1.1.359"/>
    </reaction>
</comment>
<comment type="subcellular location">
    <subcellularLocation>
        <location evidence="1">Nucleus</location>
    </subcellularLocation>
    <subcellularLocation>
        <location evidence="1">Chromosome</location>
    </subcellularLocation>
</comment>
<comment type="domain">
    <text evidence="1">The AWS and SET domains are necessary for transcription repression.</text>
</comment>
<comment type="similarity">
    <text evidence="7">Belongs to the class V-like SAM-binding methyltransferase superfamily. Histone-lysine methyltransferase family. SET2 subfamily.</text>
</comment>
<protein>
    <recommendedName>
        <fullName>Histone-lysine N-methyltransferase, H3 lysine-36 specific</fullName>
        <ecNumber evidence="2">2.1.1.359</ecNumber>
    </recommendedName>
    <alternativeName>
        <fullName>SET domain-containing protein 2</fullName>
    </alternativeName>
</protein>
<accession>Q59XV0</accession>
<accession>A0A1D8PIP1</accession>
<gene>
    <name type="primary">SET2</name>
    <name type="ordered locus">CAALFM_C210250CA</name>
    <name type="ORF">CaO19.1755</name>
    <name type="ORF">CaO19.9324</name>
</gene>
<keyword id="KW-0158">Chromosome</keyword>
<keyword id="KW-0489">Methyltransferase</keyword>
<keyword id="KW-0539">Nucleus</keyword>
<keyword id="KW-1185">Reference proteome</keyword>
<keyword id="KW-0678">Repressor</keyword>
<keyword id="KW-0949">S-adenosyl-L-methionine</keyword>
<keyword id="KW-0804">Transcription</keyword>
<keyword id="KW-0805">Transcription regulation</keyword>
<keyword id="KW-0808">Transferase</keyword>